<feature type="chain" id="PRO_1000212656" description="Glycine dehydrogenase (decarboxylating)">
    <location>
        <begin position="1"/>
        <end position="946"/>
    </location>
</feature>
<feature type="modified residue" description="N6-(pyridoxal phosphate)lysine" evidence="1">
    <location>
        <position position="700"/>
    </location>
</feature>
<keyword id="KW-0560">Oxidoreductase</keyword>
<keyword id="KW-0663">Pyridoxal phosphate</keyword>
<dbReference type="EC" id="1.4.4.2" evidence="1"/>
<dbReference type="EMBL" id="AM181176">
    <property type="protein sequence ID" value="CAY51790.1"/>
    <property type="molecule type" value="Genomic_DNA"/>
</dbReference>
<dbReference type="RefSeq" id="WP_015885598.1">
    <property type="nucleotide sequence ID" value="NC_012660.1"/>
</dbReference>
<dbReference type="SMR" id="C3JYR1"/>
<dbReference type="STRING" id="294.SRM1_04328"/>
<dbReference type="eggNOG" id="COG0403">
    <property type="taxonomic scope" value="Bacteria"/>
</dbReference>
<dbReference type="eggNOG" id="COG1003">
    <property type="taxonomic scope" value="Bacteria"/>
</dbReference>
<dbReference type="HOGENOM" id="CLU_004620_1_1_6"/>
<dbReference type="OrthoDB" id="9801272at2"/>
<dbReference type="GO" id="GO:0005829">
    <property type="term" value="C:cytosol"/>
    <property type="evidence" value="ECO:0007669"/>
    <property type="project" value="TreeGrafter"/>
</dbReference>
<dbReference type="GO" id="GO:0005960">
    <property type="term" value="C:glycine cleavage complex"/>
    <property type="evidence" value="ECO:0007669"/>
    <property type="project" value="TreeGrafter"/>
</dbReference>
<dbReference type="GO" id="GO:0016594">
    <property type="term" value="F:glycine binding"/>
    <property type="evidence" value="ECO:0007669"/>
    <property type="project" value="TreeGrafter"/>
</dbReference>
<dbReference type="GO" id="GO:0004375">
    <property type="term" value="F:glycine dehydrogenase (decarboxylating) activity"/>
    <property type="evidence" value="ECO:0007669"/>
    <property type="project" value="UniProtKB-EC"/>
</dbReference>
<dbReference type="GO" id="GO:0030170">
    <property type="term" value="F:pyridoxal phosphate binding"/>
    <property type="evidence" value="ECO:0007669"/>
    <property type="project" value="TreeGrafter"/>
</dbReference>
<dbReference type="GO" id="GO:0019464">
    <property type="term" value="P:glycine decarboxylation via glycine cleavage system"/>
    <property type="evidence" value="ECO:0007669"/>
    <property type="project" value="UniProtKB-UniRule"/>
</dbReference>
<dbReference type="CDD" id="cd00613">
    <property type="entry name" value="GDC-P"/>
    <property type="match status" value="2"/>
</dbReference>
<dbReference type="FunFam" id="3.90.1150.10:FF:000025">
    <property type="entry name" value="Glycine cleavage system P protein"/>
    <property type="match status" value="1"/>
</dbReference>
<dbReference type="FunFam" id="3.40.640.10:FF:000005">
    <property type="entry name" value="Glycine dehydrogenase (decarboxylating), mitochondrial"/>
    <property type="match status" value="1"/>
</dbReference>
<dbReference type="FunFam" id="3.90.1150.10:FF:000007">
    <property type="entry name" value="Glycine dehydrogenase (decarboxylating), mitochondrial"/>
    <property type="match status" value="1"/>
</dbReference>
<dbReference type="FunFam" id="3.40.640.10:FF:000007">
    <property type="entry name" value="glycine dehydrogenase (Decarboxylating), mitochondrial"/>
    <property type="match status" value="1"/>
</dbReference>
<dbReference type="Gene3D" id="3.90.1150.10">
    <property type="entry name" value="Aspartate Aminotransferase, domain 1"/>
    <property type="match status" value="2"/>
</dbReference>
<dbReference type="Gene3D" id="3.40.640.10">
    <property type="entry name" value="Type I PLP-dependent aspartate aminotransferase-like (Major domain)"/>
    <property type="match status" value="2"/>
</dbReference>
<dbReference type="HAMAP" id="MF_00711">
    <property type="entry name" value="GcvP"/>
    <property type="match status" value="1"/>
</dbReference>
<dbReference type="InterPro" id="IPR003437">
    <property type="entry name" value="GcvP"/>
</dbReference>
<dbReference type="InterPro" id="IPR049316">
    <property type="entry name" value="GDC-P_C"/>
</dbReference>
<dbReference type="InterPro" id="IPR049315">
    <property type="entry name" value="GDC-P_N"/>
</dbReference>
<dbReference type="InterPro" id="IPR020581">
    <property type="entry name" value="GDC_P"/>
</dbReference>
<dbReference type="InterPro" id="IPR015424">
    <property type="entry name" value="PyrdxlP-dep_Trfase"/>
</dbReference>
<dbReference type="InterPro" id="IPR015421">
    <property type="entry name" value="PyrdxlP-dep_Trfase_major"/>
</dbReference>
<dbReference type="InterPro" id="IPR015422">
    <property type="entry name" value="PyrdxlP-dep_Trfase_small"/>
</dbReference>
<dbReference type="NCBIfam" id="TIGR00461">
    <property type="entry name" value="gcvP"/>
    <property type="match status" value="1"/>
</dbReference>
<dbReference type="NCBIfam" id="NF003346">
    <property type="entry name" value="PRK04366.1"/>
    <property type="match status" value="1"/>
</dbReference>
<dbReference type="PANTHER" id="PTHR11773:SF1">
    <property type="entry name" value="GLYCINE DEHYDROGENASE (DECARBOXYLATING), MITOCHONDRIAL"/>
    <property type="match status" value="1"/>
</dbReference>
<dbReference type="PANTHER" id="PTHR11773">
    <property type="entry name" value="GLYCINE DEHYDROGENASE, DECARBOXYLATING"/>
    <property type="match status" value="1"/>
</dbReference>
<dbReference type="Pfam" id="PF21478">
    <property type="entry name" value="GcvP2_C"/>
    <property type="match status" value="1"/>
</dbReference>
<dbReference type="Pfam" id="PF02347">
    <property type="entry name" value="GDC-P"/>
    <property type="match status" value="2"/>
</dbReference>
<dbReference type="SUPFAM" id="SSF53383">
    <property type="entry name" value="PLP-dependent transferases"/>
    <property type="match status" value="2"/>
</dbReference>
<sequence>MTVNLTTANEFIARHIGPRQEDEQHMLASLGFDSLEALSASVIPESIKGTSVLGLEDGLSEAEALAKIKAIAGQNQLFKTYIGQGYYNCHTPSPILRNLLENPAWYTAYTPYQPEISQGRLEALLNFQTLISDLTGLPIANASLLDEATAAAEAMTFCKRLSKNKGSNAFFASIHSHPQTLDVLRTRAEPLGIDVVVGDERELTDVSAFFGALLQYPASNGDVFDYRALTERFHASNALVAVAADLLALTLLTPPGEFGADVAIGSAQRFGVPLGFGGPHAAYFSTKDAFKRDMPGRLVGVSVDRFGKPALRLAMQTREQHIRREKATSNICTAQVLLANIASMYAVYHGPKGLTQIAQRIHQLTAILAKGLTALGQKVEQEHFFDTLTLNTGANTATLHDKARAQRINLRVVDAERLGVSVDETTTQADIETLWAIFADGKALPDFAANVDSTLPAALLRQSPILSHPVFNRYHSETELMRYLRKLADKDLALDRTMIPLGSCTMKLNAASEMIPVTWAEFGALHPFAPAEQSAGYLQLTSDLEAMLCAATGYDAISLQPNAGSQGEYAGLLAIRAYHQSRGEERRDICLIPSSAHGTNPATANMAGMRVVVTACDARGNVDIEDLRAKAIEHRDHLAALMITYPSTHGVFEEGIREICGIIHDNGGQVYIDGANMNAMVGLCAPGKFGGDVSHLNLHKTFCIPHGGGGPGVGPIGVKSHLTPFLPGHAAMERKEGAVCAAPFGSASILPITWMYISMMGGAGLKRASQLAILNANYISRRLEEHYPVLYTGSNGLVAHECILDLRPLKDSSGISVDDVAKRLIDFGFHAPTMSFPVAGTLMIEPTESESKEELDRFCDAMIAIREEIRAVENGTLDKDDNPLKNAPHTAAELVGEWSHPYSREQAVYPVASLIEGKYWPPVGRVDNVFGDRNLVCACPSIESYA</sequence>
<proteinExistence type="inferred from homology"/>
<protein>
    <recommendedName>
        <fullName evidence="1">Glycine dehydrogenase (decarboxylating)</fullName>
        <ecNumber evidence="1">1.4.4.2</ecNumber>
    </recommendedName>
    <alternativeName>
        <fullName evidence="1">Glycine cleavage system P-protein</fullName>
    </alternativeName>
    <alternativeName>
        <fullName evidence="1">Glycine decarboxylase</fullName>
    </alternativeName>
    <alternativeName>
        <fullName evidence="1">Glycine dehydrogenase (aminomethyl-transferring)</fullName>
    </alternativeName>
</protein>
<gene>
    <name evidence="1" type="primary">gcvP</name>
    <name type="ordered locus">PFLU_4897</name>
</gene>
<accession>C3JYR1</accession>
<reference key="1">
    <citation type="journal article" date="2009" name="Genome Biol.">
        <title>Genomic and genetic analyses of diversity and plant interactions of Pseudomonas fluorescens.</title>
        <authorList>
            <person name="Silby M.W."/>
            <person name="Cerdeno-Tarraga A.M."/>
            <person name="Vernikos G.S."/>
            <person name="Giddens S.R."/>
            <person name="Jackson R.W."/>
            <person name="Preston G.M."/>
            <person name="Zhang X.-X."/>
            <person name="Moon C.D."/>
            <person name="Gehrig S.M."/>
            <person name="Godfrey S.A.C."/>
            <person name="Knight C.G."/>
            <person name="Malone J.G."/>
            <person name="Robinson Z."/>
            <person name="Spiers A.J."/>
            <person name="Harris S."/>
            <person name="Challis G.L."/>
            <person name="Yaxley A.M."/>
            <person name="Harris D."/>
            <person name="Seeger K."/>
            <person name="Murphy L."/>
            <person name="Rutter S."/>
            <person name="Squares R."/>
            <person name="Quail M.A."/>
            <person name="Saunders E."/>
            <person name="Mavromatis K."/>
            <person name="Brettin T.S."/>
            <person name="Bentley S.D."/>
            <person name="Hothersall J."/>
            <person name="Stephens E."/>
            <person name="Thomas C.M."/>
            <person name="Parkhill J."/>
            <person name="Levy S.B."/>
            <person name="Rainey P.B."/>
            <person name="Thomson N.R."/>
        </authorList>
    </citation>
    <scope>NUCLEOTIDE SEQUENCE [LARGE SCALE GENOMIC DNA]</scope>
    <source>
        <strain>SBW25</strain>
    </source>
</reference>
<evidence type="ECO:0000255" key="1">
    <source>
        <dbReference type="HAMAP-Rule" id="MF_00711"/>
    </source>
</evidence>
<comment type="function">
    <text evidence="1">The glycine cleavage system catalyzes the degradation of glycine. The P protein binds the alpha-amino group of glycine through its pyridoxal phosphate cofactor; CO(2) is released and the remaining methylamine moiety is then transferred to the lipoamide cofactor of the H protein.</text>
</comment>
<comment type="catalytic activity">
    <reaction evidence="1">
        <text>N(6)-[(R)-lipoyl]-L-lysyl-[glycine-cleavage complex H protein] + glycine + H(+) = N(6)-[(R)-S(8)-aminomethyldihydrolipoyl]-L-lysyl-[glycine-cleavage complex H protein] + CO2</text>
        <dbReference type="Rhea" id="RHEA:24304"/>
        <dbReference type="Rhea" id="RHEA-COMP:10494"/>
        <dbReference type="Rhea" id="RHEA-COMP:10495"/>
        <dbReference type="ChEBI" id="CHEBI:15378"/>
        <dbReference type="ChEBI" id="CHEBI:16526"/>
        <dbReference type="ChEBI" id="CHEBI:57305"/>
        <dbReference type="ChEBI" id="CHEBI:83099"/>
        <dbReference type="ChEBI" id="CHEBI:83143"/>
        <dbReference type="EC" id="1.4.4.2"/>
    </reaction>
</comment>
<comment type="cofactor">
    <cofactor evidence="1">
        <name>pyridoxal 5'-phosphate</name>
        <dbReference type="ChEBI" id="CHEBI:597326"/>
    </cofactor>
</comment>
<comment type="subunit">
    <text evidence="1">The glycine cleavage system is composed of four proteins: P, T, L and H.</text>
</comment>
<comment type="similarity">
    <text evidence="1">Belongs to the GcvP family.</text>
</comment>
<name>GCSP_PSEFS</name>
<organism>
    <name type="scientific">Pseudomonas fluorescens (strain SBW25)</name>
    <dbReference type="NCBI Taxonomy" id="216595"/>
    <lineage>
        <taxon>Bacteria</taxon>
        <taxon>Pseudomonadati</taxon>
        <taxon>Pseudomonadota</taxon>
        <taxon>Gammaproteobacteria</taxon>
        <taxon>Pseudomonadales</taxon>
        <taxon>Pseudomonadaceae</taxon>
        <taxon>Pseudomonas</taxon>
    </lineage>
</organism>